<name>RNP4_SULTO</name>
<organism>
    <name type="scientific">Sulfurisphaera tokodaii (strain DSM 16993 / JCM 10545 / NBRC 100140 / 7)</name>
    <name type="common">Sulfolobus tokodaii</name>
    <dbReference type="NCBI Taxonomy" id="273063"/>
    <lineage>
        <taxon>Archaea</taxon>
        <taxon>Thermoproteota</taxon>
        <taxon>Thermoprotei</taxon>
        <taxon>Sulfolobales</taxon>
        <taxon>Sulfolobaceae</taxon>
        <taxon>Sulfurisphaera</taxon>
    </lineage>
</organism>
<reference key="1">
    <citation type="journal article" date="2001" name="DNA Res.">
        <title>Complete genome sequence of an aerobic thermoacidophilic Crenarchaeon, Sulfolobus tokodaii strain7.</title>
        <authorList>
            <person name="Kawarabayasi Y."/>
            <person name="Hino Y."/>
            <person name="Horikawa H."/>
            <person name="Jin-no K."/>
            <person name="Takahashi M."/>
            <person name="Sekine M."/>
            <person name="Baba S."/>
            <person name="Ankai A."/>
            <person name="Kosugi H."/>
            <person name="Hosoyama A."/>
            <person name="Fukui S."/>
            <person name="Nagai Y."/>
            <person name="Nishijima K."/>
            <person name="Otsuka R."/>
            <person name="Nakazawa H."/>
            <person name="Takamiya M."/>
            <person name="Kato Y."/>
            <person name="Yoshizawa T."/>
            <person name="Tanaka T."/>
            <person name="Kudoh Y."/>
            <person name="Yamazaki J."/>
            <person name="Kushida N."/>
            <person name="Oguchi A."/>
            <person name="Aoki K."/>
            <person name="Masuda S."/>
            <person name="Yanagii M."/>
            <person name="Nishimura M."/>
            <person name="Yamagishi A."/>
            <person name="Oshima T."/>
            <person name="Kikuchi H."/>
        </authorList>
    </citation>
    <scope>NUCLEOTIDE SEQUENCE [LARGE SCALE GENOMIC DNA]</scope>
    <source>
        <strain>DSM 16993 / JCM 10545 / NBRC 100140 / 7</strain>
    </source>
</reference>
<protein>
    <recommendedName>
        <fullName evidence="1">Ribonuclease P protein component 4</fullName>
        <shortName evidence="1">RNase P component 4</shortName>
        <ecNumber evidence="1">3.1.26.5</ecNumber>
    </recommendedName>
    <alternativeName>
        <fullName evidence="1">Rpp21</fullName>
    </alternativeName>
</protein>
<comment type="function">
    <text evidence="1">Part of ribonuclease P, a protein complex that generates mature tRNA molecules by cleaving their 5'-ends.</text>
</comment>
<comment type="catalytic activity">
    <reaction evidence="1">
        <text>Endonucleolytic cleavage of RNA, removing 5'-extranucleotides from tRNA precursor.</text>
        <dbReference type="EC" id="3.1.26.5"/>
    </reaction>
</comment>
<comment type="cofactor">
    <cofactor evidence="1">
        <name>Zn(2+)</name>
        <dbReference type="ChEBI" id="CHEBI:29105"/>
    </cofactor>
    <text evidence="1">Binds 1 zinc ion per subunit.</text>
</comment>
<comment type="subunit">
    <text evidence="1">Consists of a catalytic RNA component and at least 4-5 protein subunits.</text>
</comment>
<comment type="subcellular location">
    <subcellularLocation>
        <location evidence="1">Cytoplasm</location>
    </subcellularLocation>
</comment>
<comment type="similarity">
    <text evidence="1">Belongs to the eukaryotic/archaeal RNase P protein component 4 family.</text>
</comment>
<proteinExistence type="inferred from homology"/>
<feature type="chain" id="PRO_0000153864" description="Ribonuclease P protein component 4">
    <location>
        <begin position="1"/>
        <end position="108"/>
    </location>
</feature>
<feature type="binding site" evidence="1">
    <location>
        <position position="60"/>
    </location>
    <ligand>
        <name>Zn(2+)</name>
        <dbReference type="ChEBI" id="CHEBI:29105"/>
    </ligand>
</feature>
<feature type="binding site" evidence="1">
    <location>
        <position position="63"/>
    </location>
    <ligand>
        <name>Zn(2+)</name>
        <dbReference type="ChEBI" id="CHEBI:29105"/>
    </ligand>
</feature>
<feature type="binding site" evidence="1">
    <location>
        <position position="86"/>
    </location>
    <ligand>
        <name>Zn(2+)</name>
        <dbReference type="ChEBI" id="CHEBI:29105"/>
    </ligand>
</feature>
<feature type="binding site" evidence="1">
    <location>
        <position position="89"/>
    </location>
    <ligand>
        <name>Zn(2+)</name>
        <dbReference type="ChEBI" id="CHEBI:29105"/>
    </ligand>
</feature>
<keyword id="KW-0963">Cytoplasm</keyword>
<keyword id="KW-0255">Endonuclease</keyword>
<keyword id="KW-0378">Hydrolase</keyword>
<keyword id="KW-0479">Metal-binding</keyword>
<keyword id="KW-0540">Nuclease</keyword>
<keyword id="KW-1185">Reference proteome</keyword>
<keyword id="KW-0819">tRNA processing</keyword>
<keyword id="KW-0862">Zinc</keyword>
<dbReference type="EC" id="3.1.26.5" evidence="1"/>
<dbReference type="EMBL" id="BA000023">
    <property type="protein sequence ID" value="BAB67234.1"/>
    <property type="molecule type" value="Genomic_DNA"/>
</dbReference>
<dbReference type="SMR" id="Q96YP3"/>
<dbReference type="STRING" id="273063.STK_21300"/>
<dbReference type="KEGG" id="sto:STK_21300"/>
<dbReference type="eggNOG" id="arCOG04345">
    <property type="taxonomic scope" value="Archaea"/>
</dbReference>
<dbReference type="OrthoDB" id="10058at2157"/>
<dbReference type="Proteomes" id="UP000001015">
    <property type="component" value="Chromosome"/>
</dbReference>
<dbReference type="GO" id="GO:0005737">
    <property type="term" value="C:cytoplasm"/>
    <property type="evidence" value="ECO:0007669"/>
    <property type="project" value="UniProtKB-SubCell"/>
</dbReference>
<dbReference type="GO" id="GO:0030677">
    <property type="term" value="C:ribonuclease P complex"/>
    <property type="evidence" value="ECO:0007669"/>
    <property type="project" value="UniProtKB-UniRule"/>
</dbReference>
<dbReference type="GO" id="GO:0004526">
    <property type="term" value="F:ribonuclease P activity"/>
    <property type="evidence" value="ECO:0007669"/>
    <property type="project" value="UniProtKB-UniRule"/>
</dbReference>
<dbReference type="GO" id="GO:0008270">
    <property type="term" value="F:zinc ion binding"/>
    <property type="evidence" value="ECO:0007669"/>
    <property type="project" value="UniProtKB-UniRule"/>
</dbReference>
<dbReference type="GO" id="GO:0001682">
    <property type="term" value="P:tRNA 5'-leader removal"/>
    <property type="evidence" value="ECO:0007669"/>
    <property type="project" value="UniProtKB-UniRule"/>
</dbReference>
<dbReference type="Gene3D" id="6.20.50.20">
    <property type="match status" value="1"/>
</dbReference>
<dbReference type="Gene3D" id="1.20.5.420">
    <property type="entry name" value="Immunoglobulin FC, subunit C"/>
    <property type="match status" value="1"/>
</dbReference>
<dbReference type="HAMAP" id="MF_00757">
    <property type="entry name" value="RNase_P_4"/>
    <property type="match status" value="1"/>
</dbReference>
<dbReference type="InterPro" id="IPR016432">
    <property type="entry name" value="RNP4"/>
</dbReference>
<dbReference type="InterPro" id="IPR007175">
    <property type="entry name" value="Rpr2/Snm1/Rpp21"/>
</dbReference>
<dbReference type="PANTHER" id="PTHR14742:SF0">
    <property type="entry name" value="RIBONUCLEASE P PROTEIN SUBUNIT P21"/>
    <property type="match status" value="1"/>
</dbReference>
<dbReference type="PANTHER" id="PTHR14742">
    <property type="entry name" value="RIBONUCLEASE P SUBUNIT P21"/>
    <property type="match status" value="1"/>
</dbReference>
<dbReference type="Pfam" id="PF04032">
    <property type="entry name" value="Rpr2"/>
    <property type="match status" value="1"/>
</dbReference>
<dbReference type="PIRSF" id="PIRSF004878">
    <property type="entry name" value="RNase_P_4"/>
    <property type="match status" value="1"/>
</dbReference>
<sequence>MVRVKNVKMYKKRSLQLIRLAIELAKNNNIELARMYIKLALLYSRKLKFKIPIEYKRLFCRKCFTPLIIGITERRRIKNKVLVRTCLYCGWTRRYKLQYKTTNKKSKS</sequence>
<accession>Q96YP3</accession>
<gene>
    <name evidence="1" type="primary">rnp4</name>
    <name type="ordered locus">STK_21300</name>
</gene>
<evidence type="ECO:0000255" key="1">
    <source>
        <dbReference type="HAMAP-Rule" id="MF_00757"/>
    </source>
</evidence>